<accession>Q5AB15</accession>
<accession>Q5AAS6</accession>
<feature type="chain" id="PRO_0000308737" description="Pre-rRNA-processing protein IPI3">
    <location>
        <begin position="1"/>
        <end position="505"/>
    </location>
</feature>
<feature type="repeat" description="WD 1">
    <location>
        <begin position="106"/>
        <end position="145"/>
    </location>
</feature>
<feature type="repeat" description="WD 2">
    <location>
        <begin position="148"/>
        <end position="187"/>
    </location>
</feature>
<feature type="repeat" description="WD 3">
    <location>
        <begin position="201"/>
        <end position="244"/>
    </location>
</feature>
<feature type="repeat" description="WD 4">
    <location>
        <begin position="321"/>
        <end position="362"/>
    </location>
</feature>
<comment type="function">
    <text evidence="1">Component of the RIX1 complex required for processing of ITS2 sequences from 35S pre-rRNA.</text>
</comment>
<comment type="subunit">
    <text evidence="1">Component of the RIX1 complex, composed of IPI1, RIX1/IPI2 and IPI3 in a 1:2:2 stoichiometry. The complex interacts (via RIX1) with MDN1 (via its hexameric AAA ATPase ring) and the pre-60S ribosome particles.</text>
</comment>
<comment type="subcellular location">
    <subcellularLocation>
        <location evidence="1">Nucleus</location>
    </subcellularLocation>
</comment>
<comment type="similarity">
    <text evidence="2">Belongs to the WD repeat IPI3/WDR18 family.</text>
</comment>
<proteinExistence type="inferred from homology"/>
<sequence length="505" mass="55944">MDEVVFYIAQGDPADKHSQESYGYVTSIHSSKQYASYRQADSHINGTAITGIGPGERIFTAVPNKALINVYSWGKESVDQRIPIPEALTCITLINHPNGSNNNSDNDDNQLYKLPNYRVPWLLAGGSKSGKLYIWELSSGNLLCVRDAHYQGITTIKGSSCGTFLITGGEDARCLVWNLAELISIYDKSDHQVKPYWQITDNTLPLTDLCLNDTHNINDLKLYTTSEDSTVRIYDIVTKSLLTTFILPSSAECITKDPANRALYVGLNNGLVRSIPLYSINSHTSVLESIGGMNKIITVDADQNLKETFVAHQQKTKTGDDKPVVVTKLTISFDGTSIISGDSEGRVFVSDIVTKQVVKSFTPCNSPIAYIAVETVPDDFVNNLATSTTTNKADKKHRMIPQFKRVLASTNSEEHQIFLDIPGKTTATTNATGNIDFATWLQSKQSEELQFKNLSGINSIVKQVGNENVSDLEEKLQRVSQAYTELRNKHEELIKEHAKLLDKLE</sequence>
<protein>
    <recommendedName>
        <fullName>Pre-rRNA-processing protein IPI3</fullName>
    </recommendedName>
</protein>
<organism>
    <name type="scientific">Candida albicans (strain SC5314 / ATCC MYA-2876)</name>
    <name type="common">Yeast</name>
    <dbReference type="NCBI Taxonomy" id="237561"/>
    <lineage>
        <taxon>Eukaryota</taxon>
        <taxon>Fungi</taxon>
        <taxon>Dikarya</taxon>
        <taxon>Ascomycota</taxon>
        <taxon>Saccharomycotina</taxon>
        <taxon>Pichiomycetes</taxon>
        <taxon>Debaryomycetaceae</taxon>
        <taxon>Candida/Lodderomyces clade</taxon>
        <taxon>Candida</taxon>
    </lineage>
</organism>
<name>IPI3_CANAL</name>
<gene>
    <name type="primary">IPI3</name>
    <name type="ordered locus">CAALFM_C106760CA</name>
    <name type="ORF">CaO19.13614</name>
    <name type="ORF">CaO19.6234</name>
</gene>
<keyword id="KW-0539">Nucleus</keyword>
<keyword id="KW-1185">Reference proteome</keyword>
<keyword id="KW-0677">Repeat</keyword>
<keyword id="KW-0690">Ribosome biogenesis</keyword>
<keyword id="KW-0698">rRNA processing</keyword>
<keyword id="KW-0853">WD repeat</keyword>
<dbReference type="EMBL" id="CP017623">
    <property type="status" value="NOT_ANNOTATED_CDS"/>
    <property type="molecule type" value="Genomic_DNA"/>
</dbReference>
<dbReference type="SMR" id="Q5AB15"/>
<dbReference type="BioGRID" id="1222599">
    <property type="interactions" value="1"/>
</dbReference>
<dbReference type="FunCoup" id="Q5AB15">
    <property type="interactions" value="475"/>
</dbReference>
<dbReference type="STRING" id="237561.Q5AB15"/>
<dbReference type="eggNOG" id="KOG0646">
    <property type="taxonomic scope" value="Eukaryota"/>
</dbReference>
<dbReference type="HOGENOM" id="CLU_029749_4_0_1"/>
<dbReference type="InParanoid" id="Q5AB15"/>
<dbReference type="PRO" id="PR:Q5AB15"/>
<dbReference type="Proteomes" id="UP000000559">
    <property type="component" value="Chromosome 1"/>
</dbReference>
<dbReference type="GO" id="GO:0005656">
    <property type="term" value="C:nuclear pre-replicative complex"/>
    <property type="evidence" value="ECO:0000318"/>
    <property type="project" value="GO_Central"/>
</dbReference>
<dbReference type="GO" id="GO:0120330">
    <property type="term" value="C:rixosome complex"/>
    <property type="evidence" value="ECO:0000318"/>
    <property type="project" value="GO_Central"/>
</dbReference>
<dbReference type="GO" id="GO:0006261">
    <property type="term" value="P:DNA-templated DNA replication"/>
    <property type="evidence" value="ECO:0000318"/>
    <property type="project" value="GO_Central"/>
</dbReference>
<dbReference type="GO" id="GO:0006364">
    <property type="term" value="P:rRNA processing"/>
    <property type="evidence" value="ECO:0000318"/>
    <property type="project" value="GO_Central"/>
</dbReference>
<dbReference type="Gene3D" id="2.130.10.10">
    <property type="entry name" value="YVTN repeat-like/Quinoprotein amine dehydrogenase"/>
    <property type="match status" value="1"/>
</dbReference>
<dbReference type="InterPro" id="IPR015943">
    <property type="entry name" value="WD40/YVTN_repeat-like_dom_sf"/>
</dbReference>
<dbReference type="InterPro" id="IPR019775">
    <property type="entry name" value="WD40_repeat_CS"/>
</dbReference>
<dbReference type="InterPro" id="IPR036322">
    <property type="entry name" value="WD40_repeat_dom_sf"/>
</dbReference>
<dbReference type="InterPro" id="IPR001680">
    <property type="entry name" value="WD40_rpt"/>
</dbReference>
<dbReference type="InterPro" id="IPR045227">
    <property type="entry name" value="WDR18/Ipi3/RID3"/>
</dbReference>
<dbReference type="PANTHER" id="PTHR18763:SF0">
    <property type="entry name" value="WD REPEAT-CONTAINING PROTEIN 18"/>
    <property type="match status" value="1"/>
</dbReference>
<dbReference type="PANTHER" id="PTHR18763">
    <property type="entry name" value="WD-REPEAT PROTEIN 18"/>
    <property type="match status" value="1"/>
</dbReference>
<dbReference type="Pfam" id="PF00400">
    <property type="entry name" value="WD40"/>
    <property type="match status" value="1"/>
</dbReference>
<dbReference type="SMART" id="SM00320">
    <property type="entry name" value="WD40"/>
    <property type="match status" value="4"/>
</dbReference>
<dbReference type="SUPFAM" id="SSF50978">
    <property type="entry name" value="WD40 repeat-like"/>
    <property type="match status" value="1"/>
</dbReference>
<dbReference type="PROSITE" id="PS00678">
    <property type="entry name" value="WD_REPEATS_1"/>
    <property type="match status" value="1"/>
</dbReference>
<dbReference type="PROSITE" id="PS50082">
    <property type="entry name" value="WD_REPEATS_2"/>
    <property type="match status" value="1"/>
</dbReference>
<dbReference type="PROSITE" id="PS50294">
    <property type="entry name" value="WD_REPEATS_REGION"/>
    <property type="match status" value="1"/>
</dbReference>
<reference key="1">
    <citation type="journal article" date="2004" name="Proc. Natl. Acad. Sci. U.S.A.">
        <title>The diploid genome sequence of Candida albicans.</title>
        <authorList>
            <person name="Jones T."/>
            <person name="Federspiel N.A."/>
            <person name="Chibana H."/>
            <person name="Dungan J."/>
            <person name="Kalman S."/>
            <person name="Magee B.B."/>
            <person name="Newport G."/>
            <person name="Thorstenson Y.R."/>
            <person name="Agabian N."/>
            <person name="Magee P.T."/>
            <person name="Davis R.W."/>
            <person name="Scherer S."/>
        </authorList>
    </citation>
    <scope>NUCLEOTIDE SEQUENCE [LARGE SCALE GENOMIC DNA]</scope>
    <source>
        <strain>SC5314 / ATCC MYA-2876</strain>
    </source>
</reference>
<reference key="2">
    <citation type="journal article" date="2007" name="Genome Biol.">
        <title>Assembly of the Candida albicans genome into sixteen supercontigs aligned on the eight chromosomes.</title>
        <authorList>
            <person name="van het Hoog M."/>
            <person name="Rast T.J."/>
            <person name="Martchenko M."/>
            <person name="Grindle S."/>
            <person name="Dignard D."/>
            <person name="Hogues H."/>
            <person name="Cuomo C."/>
            <person name="Berriman M."/>
            <person name="Scherer S."/>
            <person name="Magee B.B."/>
            <person name="Whiteway M."/>
            <person name="Chibana H."/>
            <person name="Nantel A."/>
            <person name="Magee P.T."/>
        </authorList>
    </citation>
    <scope>GENOME REANNOTATION</scope>
    <source>
        <strain>SC5314 / ATCC MYA-2876</strain>
    </source>
</reference>
<reference key="3">
    <citation type="journal article" date="2013" name="Genome Biol.">
        <title>Assembly of a phased diploid Candida albicans genome facilitates allele-specific measurements and provides a simple model for repeat and indel structure.</title>
        <authorList>
            <person name="Muzzey D."/>
            <person name="Schwartz K."/>
            <person name="Weissman J.S."/>
            <person name="Sherlock G."/>
        </authorList>
    </citation>
    <scope>NUCLEOTIDE SEQUENCE [LARGE SCALE GENOMIC DNA]</scope>
    <scope>GENOME REANNOTATION</scope>
    <source>
        <strain>SC5314 / ATCC MYA-2876</strain>
    </source>
</reference>
<evidence type="ECO:0000250" key="1">
    <source>
        <dbReference type="UniProtKB" id="P53877"/>
    </source>
</evidence>
<evidence type="ECO:0000305" key="2"/>